<accession>Q6ZR03</accession>
<accession>Q2T9F2</accession>
<sequence>MPCRLLHQRETRSGGPRGPRHSAPTGPGWHNAPTLQSWEESHAPSRDPRDHQGSVEDTSLGGDAPADGVSPSVPPLQGLGKAAGPGGTGQAECQVVVATHRANLKPWDGRAAPLGKRTEEGRLSTSSCASVSRNKPDSVPQGDPVWPPESTGPALCAGEETEPQSSEGLAWGPWAQPWAPSLCPSQTGTASTASPQRASRLALQGPPGTILSLSSSSPCLPPSHCDPGAASSWAGLQSLKLLLQVSFQGAADGCSLRDANTNRKGPMHGSDFPPRLCLHSMSLWGSWGSRPPSPAHSREVAS</sequence>
<evidence type="ECO:0000256" key="1">
    <source>
        <dbReference type="SAM" id="MobiDB-lite"/>
    </source>
</evidence>
<evidence type="ECO:0000305" key="2"/>
<protein>
    <recommendedName>
        <fullName>Uncharacterized protein FLJ46757</fullName>
    </recommendedName>
</protein>
<dbReference type="EMBL" id="AK128598">
    <property type="protein sequence ID" value="BAC87522.1"/>
    <property type="molecule type" value="mRNA"/>
</dbReference>
<dbReference type="EMBL" id="BC111558">
    <property type="status" value="NOT_ANNOTATED_CDS"/>
    <property type="molecule type" value="mRNA"/>
</dbReference>
<dbReference type="iPTMnet" id="Q6ZR03"/>
<dbReference type="PhosphoSitePlus" id="Q6ZR03"/>
<dbReference type="BioMuta" id="-"/>
<dbReference type="MassIVE" id="Q6ZR03"/>
<dbReference type="AGR" id="HGNC:51526"/>
<dbReference type="neXtProt" id="NX_Q6ZR03"/>
<dbReference type="InParanoid" id="Q6ZR03"/>
<dbReference type="PAN-GO" id="Q6ZR03">
    <property type="GO annotations" value="0 GO annotations based on evolutionary models"/>
</dbReference>
<dbReference type="PathwayCommons" id="Q6ZR03"/>
<dbReference type="Pharos" id="Q6ZR03">
    <property type="development level" value="Tdark"/>
</dbReference>
<dbReference type="Proteomes" id="UP000005640">
    <property type="component" value="Unplaced"/>
</dbReference>
<dbReference type="RNAct" id="Q6ZR03">
    <property type="molecule type" value="protein"/>
</dbReference>
<reference key="1">
    <citation type="journal article" date="2004" name="Nat. Genet.">
        <title>Complete sequencing and characterization of 21,243 full-length human cDNAs.</title>
        <authorList>
            <person name="Ota T."/>
            <person name="Suzuki Y."/>
            <person name="Nishikawa T."/>
            <person name="Otsuki T."/>
            <person name="Sugiyama T."/>
            <person name="Irie R."/>
            <person name="Wakamatsu A."/>
            <person name="Hayashi K."/>
            <person name="Sato H."/>
            <person name="Nagai K."/>
            <person name="Kimura K."/>
            <person name="Makita H."/>
            <person name="Sekine M."/>
            <person name="Obayashi M."/>
            <person name="Nishi T."/>
            <person name="Shibahara T."/>
            <person name="Tanaka T."/>
            <person name="Ishii S."/>
            <person name="Yamamoto J."/>
            <person name="Saito K."/>
            <person name="Kawai Y."/>
            <person name="Isono Y."/>
            <person name="Nakamura Y."/>
            <person name="Nagahari K."/>
            <person name="Murakami K."/>
            <person name="Yasuda T."/>
            <person name="Iwayanagi T."/>
            <person name="Wagatsuma M."/>
            <person name="Shiratori A."/>
            <person name="Sudo H."/>
            <person name="Hosoiri T."/>
            <person name="Kaku Y."/>
            <person name="Kodaira H."/>
            <person name="Kondo H."/>
            <person name="Sugawara M."/>
            <person name="Takahashi M."/>
            <person name="Kanda K."/>
            <person name="Yokoi T."/>
            <person name="Furuya T."/>
            <person name="Kikkawa E."/>
            <person name="Omura Y."/>
            <person name="Abe K."/>
            <person name="Kamihara K."/>
            <person name="Katsuta N."/>
            <person name="Sato K."/>
            <person name="Tanikawa M."/>
            <person name="Yamazaki M."/>
            <person name="Ninomiya K."/>
            <person name="Ishibashi T."/>
            <person name="Yamashita H."/>
            <person name="Murakawa K."/>
            <person name="Fujimori K."/>
            <person name="Tanai H."/>
            <person name="Kimata M."/>
            <person name="Watanabe M."/>
            <person name="Hiraoka S."/>
            <person name="Chiba Y."/>
            <person name="Ishida S."/>
            <person name="Ono Y."/>
            <person name="Takiguchi S."/>
            <person name="Watanabe S."/>
            <person name="Yosida M."/>
            <person name="Hotuta T."/>
            <person name="Kusano J."/>
            <person name="Kanehori K."/>
            <person name="Takahashi-Fujii A."/>
            <person name="Hara H."/>
            <person name="Tanase T.-O."/>
            <person name="Nomura Y."/>
            <person name="Togiya S."/>
            <person name="Komai F."/>
            <person name="Hara R."/>
            <person name="Takeuchi K."/>
            <person name="Arita M."/>
            <person name="Imose N."/>
            <person name="Musashino K."/>
            <person name="Yuuki H."/>
            <person name="Oshima A."/>
            <person name="Sasaki N."/>
            <person name="Aotsuka S."/>
            <person name="Yoshikawa Y."/>
            <person name="Matsunawa H."/>
            <person name="Ichihara T."/>
            <person name="Shiohata N."/>
            <person name="Sano S."/>
            <person name="Moriya S."/>
            <person name="Momiyama H."/>
            <person name="Satoh N."/>
            <person name="Takami S."/>
            <person name="Terashima Y."/>
            <person name="Suzuki O."/>
            <person name="Nakagawa S."/>
            <person name="Senoh A."/>
            <person name="Mizoguchi H."/>
            <person name="Goto Y."/>
            <person name="Shimizu F."/>
            <person name="Wakebe H."/>
            <person name="Hishigaki H."/>
            <person name="Watanabe T."/>
            <person name="Sugiyama A."/>
            <person name="Takemoto M."/>
            <person name="Kawakami B."/>
            <person name="Yamazaki M."/>
            <person name="Watanabe K."/>
            <person name="Kumagai A."/>
            <person name="Itakura S."/>
            <person name="Fukuzumi Y."/>
            <person name="Fujimori Y."/>
            <person name="Komiyama M."/>
            <person name="Tashiro H."/>
            <person name="Tanigami A."/>
            <person name="Fujiwara T."/>
            <person name="Ono T."/>
            <person name="Yamada K."/>
            <person name="Fujii Y."/>
            <person name="Ozaki K."/>
            <person name="Hirao M."/>
            <person name="Ohmori Y."/>
            <person name="Kawabata A."/>
            <person name="Hikiji T."/>
            <person name="Kobatake N."/>
            <person name="Inagaki H."/>
            <person name="Ikema Y."/>
            <person name="Okamoto S."/>
            <person name="Okitani R."/>
            <person name="Kawakami T."/>
            <person name="Noguchi S."/>
            <person name="Itoh T."/>
            <person name="Shigeta K."/>
            <person name="Senba T."/>
            <person name="Matsumura K."/>
            <person name="Nakajima Y."/>
            <person name="Mizuno T."/>
            <person name="Morinaga M."/>
            <person name="Sasaki M."/>
            <person name="Togashi T."/>
            <person name="Oyama M."/>
            <person name="Hata H."/>
            <person name="Watanabe M."/>
            <person name="Komatsu T."/>
            <person name="Mizushima-Sugano J."/>
            <person name="Satoh T."/>
            <person name="Shirai Y."/>
            <person name="Takahashi Y."/>
            <person name="Nakagawa K."/>
            <person name="Okumura K."/>
            <person name="Nagase T."/>
            <person name="Nomura N."/>
            <person name="Kikuchi H."/>
            <person name="Masuho Y."/>
            <person name="Yamashita R."/>
            <person name="Nakai K."/>
            <person name="Yada T."/>
            <person name="Nakamura Y."/>
            <person name="Ohara O."/>
            <person name="Isogai T."/>
            <person name="Sugano S."/>
        </authorList>
    </citation>
    <scope>NUCLEOTIDE SEQUENCE [LARGE SCALE MRNA]</scope>
    <source>
        <tissue>Trachea</tissue>
    </source>
</reference>
<reference key="2">
    <citation type="journal article" date="2004" name="Genome Res.">
        <title>The status, quality, and expansion of the NIH full-length cDNA project: the Mammalian Gene Collection (MGC).</title>
        <authorList>
            <consortium name="The MGC Project Team"/>
        </authorList>
    </citation>
    <scope>NUCLEOTIDE SEQUENCE [LARGE SCALE MRNA]</scope>
</reference>
<feature type="chain" id="PRO_0000339366" description="Uncharacterized protein FLJ46757">
    <location>
        <begin position="1"/>
        <end position="302"/>
    </location>
</feature>
<feature type="region of interest" description="Disordered" evidence="1">
    <location>
        <begin position="1"/>
        <end position="167"/>
    </location>
</feature>
<feature type="region of interest" description="Disordered" evidence="1">
    <location>
        <begin position="180"/>
        <end position="199"/>
    </location>
</feature>
<feature type="compositionally biased region" description="Basic and acidic residues" evidence="1">
    <location>
        <begin position="39"/>
        <end position="54"/>
    </location>
</feature>
<feature type="compositionally biased region" description="Polar residues" evidence="1">
    <location>
        <begin position="123"/>
        <end position="133"/>
    </location>
</feature>
<feature type="compositionally biased region" description="Polar residues" evidence="1">
    <location>
        <begin position="183"/>
        <end position="197"/>
    </location>
</feature>
<feature type="sequence conflict" description="In Ref. 2; BC111558." evidence="2" ref="2">
    <original>P</original>
    <variation>H</variation>
    <location>
        <position position="274"/>
    </location>
</feature>
<keyword id="KW-1185">Reference proteome</keyword>
<organism>
    <name type="scientific">Homo sapiens</name>
    <name type="common">Human</name>
    <dbReference type="NCBI Taxonomy" id="9606"/>
    <lineage>
        <taxon>Eukaryota</taxon>
        <taxon>Metazoa</taxon>
        <taxon>Chordata</taxon>
        <taxon>Craniata</taxon>
        <taxon>Vertebrata</taxon>
        <taxon>Euteleostomi</taxon>
        <taxon>Mammalia</taxon>
        <taxon>Eutheria</taxon>
        <taxon>Euarchontoglires</taxon>
        <taxon>Primates</taxon>
        <taxon>Haplorrhini</taxon>
        <taxon>Catarrhini</taxon>
        <taxon>Hominidae</taxon>
        <taxon>Homo</taxon>
    </lineage>
</organism>
<proteinExistence type="evidence at transcript level"/>
<name>YU004_HUMAN</name>